<reference key="1">
    <citation type="journal article" date="1997" name="Nature">
        <title>The nucleotide sequence of Saccharomyces cerevisiae chromosome IX.</title>
        <authorList>
            <person name="Churcher C.M."/>
            <person name="Bowman S."/>
            <person name="Badcock K."/>
            <person name="Bankier A.T."/>
            <person name="Brown D."/>
            <person name="Chillingworth T."/>
            <person name="Connor R."/>
            <person name="Devlin K."/>
            <person name="Gentles S."/>
            <person name="Hamlin N."/>
            <person name="Harris D.E."/>
            <person name="Horsnell T."/>
            <person name="Hunt S."/>
            <person name="Jagels K."/>
            <person name="Jones M."/>
            <person name="Lye G."/>
            <person name="Moule S."/>
            <person name="Odell C."/>
            <person name="Pearson D."/>
            <person name="Rajandream M.A."/>
            <person name="Rice P."/>
            <person name="Rowley N."/>
            <person name="Skelton J."/>
            <person name="Smith V."/>
            <person name="Walsh S.V."/>
            <person name="Whitehead S."/>
            <person name="Barrell B.G."/>
        </authorList>
    </citation>
    <scope>NUCLEOTIDE SEQUENCE [LARGE SCALE GENOMIC DNA]</scope>
    <source>
        <strain>ATCC 204508 / S288c</strain>
    </source>
</reference>
<reference key="2">
    <citation type="journal article" date="2014" name="G3 (Bethesda)">
        <title>The reference genome sequence of Saccharomyces cerevisiae: Then and now.</title>
        <authorList>
            <person name="Engel S.R."/>
            <person name="Dietrich F.S."/>
            <person name="Fisk D.G."/>
            <person name="Binkley G."/>
            <person name="Balakrishnan R."/>
            <person name="Costanzo M.C."/>
            <person name="Dwight S.S."/>
            <person name="Hitz B.C."/>
            <person name="Karra K."/>
            <person name="Nash R.S."/>
            <person name="Weng S."/>
            <person name="Wong E.D."/>
            <person name="Lloyd P."/>
            <person name="Skrzypek M.S."/>
            <person name="Miyasato S.R."/>
            <person name="Simison M."/>
            <person name="Cherry J.M."/>
        </authorList>
    </citation>
    <scope>GENOME REANNOTATION</scope>
    <source>
        <strain>ATCC 204508 / S288c</strain>
    </source>
</reference>
<reference key="3">
    <citation type="journal article" date="2002" name="Genome Res.">
        <title>Parallel identification of new genes in Saccharomyces cerevisiae.</title>
        <authorList>
            <person name="Oshiro G."/>
            <person name="Wodicka L.M."/>
            <person name="Washburn M.P."/>
            <person name="Yates J.R. III"/>
            <person name="Lockhart D.J."/>
            <person name="Winzeler E.A."/>
        </authorList>
    </citation>
    <scope>IDENTIFICATION BY MASS SPECTROMETRY</scope>
</reference>
<accession>Q3E7Z4</accession>
<accession>D6VVN5</accession>
<sequence>MMCVCIPKKKLMDWRVYYIYSYVVCLYMCGSDCACICVLACVVQCVCFNVEMRL</sequence>
<gene>
    <name type="ordered locus">YIL046W-A</name>
</gene>
<feature type="chain" id="PRO_0000245403" description="Uncharacterized protein YIL046W-A">
    <location>
        <begin position="1"/>
        <end position="54"/>
    </location>
</feature>
<feature type="transmembrane region" description="Helical" evidence="1">
    <location>
        <begin position="21"/>
        <end position="43"/>
    </location>
</feature>
<organism>
    <name type="scientific">Saccharomyces cerevisiae (strain ATCC 204508 / S288c)</name>
    <name type="common">Baker's yeast</name>
    <dbReference type="NCBI Taxonomy" id="559292"/>
    <lineage>
        <taxon>Eukaryota</taxon>
        <taxon>Fungi</taxon>
        <taxon>Dikarya</taxon>
        <taxon>Ascomycota</taxon>
        <taxon>Saccharomycotina</taxon>
        <taxon>Saccharomycetes</taxon>
        <taxon>Saccharomycetales</taxon>
        <taxon>Saccharomycetaceae</taxon>
        <taxon>Saccharomyces</taxon>
    </lineage>
</organism>
<evidence type="ECO:0000255" key="1"/>
<evidence type="ECO:0000305" key="2"/>
<proteinExistence type="evidence at protein level"/>
<comment type="subcellular location">
    <subcellularLocation>
        <location evidence="2">Membrane</location>
        <topology evidence="2">Single-pass membrane protein</topology>
    </subcellularLocation>
</comment>
<protein>
    <recommendedName>
        <fullName>Uncharacterized protein YIL046W-A</fullName>
    </recommendedName>
</protein>
<keyword id="KW-0472">Membrane</keyword>
<keyword id="KW-1185">Reference proteome</keyword>
<keyword id="KW-0812">Transmembrane</keyword>
<keyword id="KW-1133">Transmembrane helix</keyword>
<name>YI046_YEAST</name>
<dbReference type="EMBL" id="Z46861">
    <property type="status" value="NOT_ANNOTATED_CDS"/>
    <property type="molecule type" value="Genomic_DNA"/>
</dbReference>
<dbReference type="EMBL" id="BK006942">
    <property type="protein sequence ID" value="DAA08501.1"/>
    <property type="molecule type" value="Genomic_DNA"/>
</dbReference>
<dbReference type="RefSeq" id="NP_878097.1">
    <property type="nucleotide sequence ID" value="NM_001184654.1"/>
</dbReference>
<dbReference type="BioGRID" id="37034">
    <property type="interactions" value="35"/>
</dbReference>
<dbReference type="FunCoup" id="Q3E7Z4">
    <property type="interactions" value="18"/>
</dbReference>
<dbReference type="STRING" id="4932.YIL046W-A"/>
<dbReference type="PaxDb" id="4932-YIL046W-A"/>
<dbReference type="EnsemblFungi" id="YIL046W-A_mRNA">
    <property type="protein sequence ID" value="YIL046W-A"/>
    <property type="gene ID" value="YIL046W-A"/>
</dbReference>
<dbReference type="GeneID" id="1466492"/>
<dbReference type="KEGG" id="sce:YIL046W-A"/>
<dbReference type="AGR" id="SGD:S000028836"/>
<dbReference type="SGD" id="S000028836">
    <property type="gene designation" value="YIL046W-A"/>
</dbReference>
<dbReference type="VEuPathDB" id="FungiDB:YIL046W-A"/>
<dbReference type="HOGENOM" id="CLU_213482_0_0_1"/>
<dbReference type="InParanoid" id="Q3E7Z4"/>
<dbReference type="BioCyc" id="YEAST:G3O-31474-MONOMER"/>
<dbReference type="BioGRID-ORCS" id="1466492">
    <property type="hits" value="0 hits in 10 CRISPR screens"/>
</dbReference>
<dbReference type="PRO" id="PR:Q3E7Z4"/>
<dbReference type="Proteomes" id="UP000002311">
    <property type="component" value="Chromosome IX"/>
</dbReference>
<dbReference type="RNAct" id="Q3E7Z4">
    <property type="molecule type" value="protein"/>
</dbReference>
<dbReference type="GO" id="GO:0016020">
    <property type="term" value="C:membrane"/>
    <property type="evidence" value="ECO:0007669"/>
    <property type="project" value="UniProtKB-SubCell"/>
</dbReference>